<evidence type="ECO:0000250" key="1"/>
<evidence type="ECO:0000255" key="2"/>
<evidence type="ECO:0000305" key="3"/>
<accession>Q54SD0</accession>
<dbReference type="EMBL" id="AAFI02000047">
    <property type="protein sequence ID" value="EAL66128.1"/>
    <property type="molecule type" value="Genomic_DNA"/>
</dbReference>
<dbReference type="RefSeq" id="XP_640109.1">
    <property type="nucleotide sequence ID" value="XM_635017.1"/>
</dbReference>
<dbReference type="SMR" id="Q54SD0"/>
<dbReference type="FunCoup" id="Q54SD0">
    <property type="interactions" value="719"/>
</dbReference>
<dbReference type="STRING" id="44689.Q54SD0"/>
<dbReference type="PaxDb" id="44689-DDB0230041"/>
<dbReference type="EnsemblProtists" id="EAL66128">
    <property type="protein sequence ID" value="EAL66128"/>
    <property type="gene ID" value="DDB_G0282537"/>
</dbReference>
<dbReference type="GeneID" id="8623640"/>
<dbReference type="KEGG" id="ddi:DDB_G0282537"/>
<dbReference type="dictyBase" id="DDB_G0282537">
    <property type="gene designation" value="rabS"/>
</dbReference>
<dbReference type="VEuPathDB" id="AmoebaDB:DDB_G0282537"/>
<dbReference type="eggNOG" id="KOG0084">
    <property type="taxonomic scope" value="Eukaryota"/>
</dbReference>
<dbReference type="HOGENOM" id="CLU_041217_10_1_1"/>
<dbReference type="InParanoid" id="Q54SD0"/>
<dbReference type="OMA" id="WIGVEFR"/>
<dbReference type="PhylomeDB" id="Q54SD0"/>
<dbReference type="Reactome" id="R-DDI-162658">
    <property type="pathway name" value="Golgi Cisternae Pericentriolar Stack Reorganization"/>
</dbReference>
<dbReference type="Reactome" id="R-DDI-204005">
    <property type="pathway name" value="COPII-mediated vesicle transport"/>
</dbReference>
<dbReference type="Reactome" id="R-DDI-6807878">
    <property type="pathway name" value="COPI-mediated anterograde transport"/>
</dbReference>
<dbReference type="Reactome" id="R-DDI-6811434">
    <property type="pathway name" value="COPI-dependent Golgi-to-ER retrograde traffic"/>
</dbReference>
<dbReference type="Reactome" id="R-DDI-6811440">
    <property type="pathway name" value="Retrograde transport at the Trans-Golgi-Network"/>
</dbReference>
<dbReference type="Reactome" id="R-DDI-8873719">
    <property type="pathway name" value="RAB geranylgeranylation"/>
</dbReference>
<dbReference type="Reactome" id="R-DDI-8876198">
    <property type="pathway name" value="RAB GEFs exchange GTP for GDP on RABs"/>
</dbReference>
<dbReference type="PRO" id="PR:Q54SD0"/>
<dbReference type="Proteomes" id="UP000002195">
    <property type="component" value="Chromosome 3"/>
</dbReference>
<dbReference type="GO" id="GO:0031164">
    <property type="term" value="C:contractile vacuolar membrane"/>
    <property type="evidence" value="ECO:0000314"/>
    <property type="project" value="dictyBase"/>
</dbReference>
<dbReference type="GO" id="GO:0012505">
    <property type="term" value="C:endomembrane system"/>
    <property type="evidence" value="ECO:0000318"/>
    <property type="project" value="GO_Central"/>
</dbReference>
<dbReference type="GO" id="GO:0000139">
    <property type="term" value="C:Golgi membrane"/>
    <property type="evidence" value="ECO:0000314"/>
    <property type="project" value="dictyBase"/>
</dbReference>
<dbReference type="GO" id="GO:0005886">
    <property type="term" value="C:plasma membrane"/>
    <property type="evidence" value="ECO:0007669"/>
    <property type="project" value="UniProtKB-SubCell"/>
</dbReference>
<dbReference type="GO" id="GO:0005525">
    <property type="term" value="F:GTP binding"/>
    <property type="evidence" value="ECO:0007669"/>
    <property type="project" value="UniProtKB-KW"/>
</dbReference>
<dbReference type="GO" id="GO:0003924">
    <property type="term" value="F:GTPase activity"/>
    <property type="evidence" value="ECO:0000318"/>
    <property type="project" value="GO_Central"/>
</dbReference>
<dbReference type="GO" id="GO:0006971">
    <property type="term" value="P:hypotonic response"/>
    <property type="evidence" value="ECO:0007007"/>
    <property type="project" value="dictyBase"/>
</dbReference>
<dbReference type="GO" id="GO:0006886">
    <property type="term" value="P:intracellular protein transport"/>
    <property type="evidence" value="ECO:0000318"/>
    <property type="project" value="GO_Central"/>
</dbReference>
<dbReference type="GO" id="GO:2001135">
    <property type="term" value="P:regulation of endocytic recycling"/>
    <property type="evidence" value="ECO:0000315"/>
    <property type="project" value="dictyBase"/>
</dbReference>
<dbReference type="GO" id="GO:0090182">
    <property type="term" value="P:regulation of secretion of lysosomal enzymes"/>
    <property type="evidence" value="ECO:0000315"/>
    <property type="project" value="dictyBase"/>
</dbReference>
<dbReference type="GO" id="GO:0006970">
    <property type="term" value="P:response to osmotic stress"/>
    <property type="evidence" value="ECO:0000315"/>
    <property type="project" value="dictyBase"/>
</dbReference>
<dbReference type="CDD" id="cd00154">
    <property type="entry name" value="Rab"/>
    <property type="match status" value="1"/>
</dbReference>
<dbReference type="FunFam" id="3.40.50.300:FF:004306">
    <property type="entry name" value="Small GTPase, putative"/>
    <property type="match status" value="1"/>
</dbReference>
<dbReference type="Gene3D" id="3.40.50.300">
    <property type="entry name" value="P-loop containing nucleotide triphosphate hydrolases"/>
    <property type="match status" value="1"/>
</dbReference>
<dbReference type="InterPro" id="IPR027417">
    <property type="entry name" value="P-loop_NTPase"/>
</dbReference>
<dbReference type="InterPro" id="IPR001806">
    <property type="entry name" value="Small_GTPase"/>
</dbReference>
<dbReference type="InterPro" id="IPR050305">
    <property type="entry name" value="Small_GTPase_Rab"/>
</dbReference>
<dbReference type="PANTHER" id="PTHR47980">
    <property type="entry name" value="LD44762P"/>
    <property type="match status" value="1"/>
</dbReference>
<dbReference type="Pfam" id="PF00071">
    <property type="entry name" value="Ras"/>
    <property type="match status" value="1"/>
</dbReference>
<dbReference type="PRINTS" id="PR00449">
    <property type="entry name" value="RASTRNSFRMNG"/>
</dbReference>
<dbReference type="SMART" id="SM00175">
    <property type="entry name" value="RAB"/>
    <property type="match status" value="1"/>
</dbReference>
<dbReference type="SMART" id="SM00173">
    <property type="entry name" value="RAS"/>
    <property type="match status" value="1"/>
</dbReference>
<dbReference type="SUPFAM" id="SSF52540">
    <property type="entry name" value="P-loop containing nucleoside triphosphate hydrolases"/>
    <property type="match status" value="1"/>
</dbReference>
<dbReference type="PROSITE" id="PS51419">
    <property type="entry name" value="RAB"/>
    <property type="match status" value="1"/>
</dbReference>
<organism>
    <name type="scientific">Dictyostelium discoideum</name>
    <name type="common">Social amoeba</name>
    <dbReference type="NCBI Taxonomy" id="44689"/>
    <lineage>
        <taxon>Eukaryota</taxon>
        <taxon>Amoebozoa</taxon>
        <taxon>Evosea</taxon>
        <taxon>Eumycetozoa</taxon>
        <taxon>Dictyostelia</taxon>
        <taxon>Dictyosteliales</taxon>
        <taxon>Dictyosteliaceae</taxon>
        <taxon>Dictyostelium</taxon>
    </lineage>
</organism>
<reference key="1">
    <citation type="journal article" date="2005" name="Nature">
        <title>The genome of the social amoeba Dictyostelium discoideum.</title>
        <authorList>
            <person name="Eichinger L."/>
            <person name="Pachebat J.A."/>
            <person name="Gloeckner G."/>
            <person name="Rajandream M.A."/>
            <person name="Sucgang R."/>
            <person name="Berriman M."/>
            <person name="Song J."/>
            <person name="Olsen R."/>
            <person name="Szafranski K."/>
            <person name="Xu Q."/>
            <person name="Tunggal B."/>
            <person name="Kummerfeld S."/>
            <person name="Madera M."/>
            <person name="Konfortov B.A."/>
            <person name="Rivero F."/>
            <person name="Bankier A.T."/>
            <person name="Lehmann R."/>
            <person name="Hamlin N."/>
            <person name="Davies R."/>
            <person name="Gaudet P."/>
            <person name="Fey P."/>
            <person name="Pilcher K."/>
            <person name="Chen G."/>
            <person name="Saunders D."/>
            <person name="Sodergren E.J."/>
            <person name="Davis P."/>
            <person name="Kerhornou A."/>
            <person name="Nie X."/>
            <person name="Hall N."/>
            <person name="Anjard C."/>
            <person name="Hemphill L."/>
            <person name="Bason N."/>
            <person name="Farbrother P."/>
            <person name="Desany B."/>
            <person name="Just E."/>
            <person name="Morio T."/>
            <person name="Rost R."/>
            <person name="Churcher C.M."/>
            <person name="Cooper J."/>
            <person name="Haydock S."/>
            <person name="van Driessche N."/>
            <person name="Cronin A."/>
            <person name="Goodhead I."/>
            <person name="Muzny D.M."/>
            <person name="Mourier T."/>
            <person name="Pain A."/>
            <person name="Lu M."/>
            <person name="Harper D."/>
            <person name="Lindsay R."/>
            <person name="Hauser H."/>
            <person name="James K.D."/>
            <person name="Quiles M."/>
            <person name="Madan Babu M."/>
            <person name="Saito T."/>
            <person name="Buchrieser C."/>
            <person name="Wardroper A."/>
            <person name="Felder M."/>
            <person name="Thangavelu M."/>
            <person name="Johnson D."/>
            <person name="Knights A."/>
            <person name="Loulseged H."/>
            <person name="Mungall K.L."/>
            <person name="Oliver K."/>
            <person name="Price C."/>
            <person name="Quail M.A."/>
            <person name="Urushihara H."/>
            <person name="Hernandez J."/>
            <person name="Rabbinowitsch E."/>
            <person name="Steffen D."/>
            <person name="Sanders M."/>
            <person name="Ma J."/>
            <person name="Kohara Y."/>
            <person name="Sharp S."/>
            <person name="Simmonds M.N."/>
            <person name="Spiegler S."/>
            <person name="Tivey A."/>
            <person name="Sugano S."/>
            <person name="White B."/>
            <person name="Walker D."/>
            <person name="Woodward J.R."/>
            <person name="Winckler T."/>
            <person name="Tanaka Y."/>
            <person name="Shaulsky G."/>
            <person name="Schleicher M."/>
            <person name="Weinstock G.M."/>
            <person name="Rosenthal A."/>
            <person name="Cox E.C."/>
            <person name="Chisholm R.L."/>
            <person name="Gibbs R.A."/>
            <person name="Loomis W.F."/>
            <person name="Platzer M."/>
            <person name="Kay R.R."/>
            <person name="Williams J.G."/>
            <person name="Dear P.H."/>
            <person name="Noegel A.A."/>
            <person name="Barrell B.G."/>
            <person name="Kuspa A."/>
        </authorList>
    </citation>
    <scope>NUCLEOTIDE SEQUENCE [LARGE SCALE GENOMIC DNA]</scope>
    <source>
        <strain>AX4</strain>
    </source>
</reference>
<proteinExistence type="inferred from homology"/>
<protein>
    <recommendedName>
        <fullName>Ras-related protein RabS</fullName>
    </recommendedName>
</protein>
<gene>
    <name type="primary">rabS</name>
    <name type="ORF">DDB_G0282537</name>
</gene>
<comment type="subcellular location">
    <subcellularLocation>
        <location evidence="3">Cell membrane</location>
        <topology evidence="3">Lipid-anchor</topology>
        <orientation evidence="3">Cytoplasmic side</orientation>
    </subcellularLocation>
</comment>
<comment type="similarity">
    <text evidence="3">Belongs to the small GTPase superfamily. Rab family.</text>
</comment>
<keyword id="KW-1003">Cell membrane</keyword>
<keyword id="KW-0342">GTP-binding</keyword>
<keyword id="KW-0449">Lipoprotein</keyword>
<keyword id="KW-0472">Membrane</keyword>
<keyword id="KW-0488">Methylation</keyword>
<keyword id="KW-0547">Nucleotide-binding</keyword>
<keyword id="KW-0636">Prenylation</keyword>
<keyword id="KW-1185">Reference proteome</keyword>
<name>RABS_DICDI</name>
<feature type="chain" id="PRO_0000332768" description="Ras-related protein RabS">
    <location>
        <begin position="1"/>
        <end position="218"/>
    </location>
</feature>
<feature type="propeptide" id="PRO_0000370836" description="Removed in mature form" evidence="2">
    <location>
        <begin position="219"/>
        <end position="221"/>
    </location>
</feature>
<feature type="short sequence motif" description="Effector region" evidence="1">
    <location>
        <begin position="38"/>
        <end position="47"/>
    </location>
</feature>
<feature type="binding site" evidence="1">
    <location>
        <begin position="16"/>
        <end position="23"/>
    </location>
    <ligand>
        <name>GTP</name>
        <dbReference type="ChEBI" id="CHEBI:37565"/>
    </ligand>
</feature>
<feature type="binding site" evidence="1">
    <location>
        <begin position="71"/>
        <end position="75"/>
    </location>
    <ligand>
        <name>GTP</name>
        <dbReference type="ChEBI" id="CHEBI:37565"/>
    </ligand>
</feature>
<feature type="binding site" evidence="1">
    <location>
        <begin position="137"/>
        <end position="140"/>
    </location>
    <ligand>
        <name>GTP</name>
        <dbReference type="ChEBI" id="CHEBI:37565"/>
    </ligand>
</feature>
<feature type="modified residue" description="Cysteine methyl ester" evidence="2">
    <location>
        <position position="218"/>
    </location>
</feature>
<feature type="lipid moiety-binding region" description="S-geranylgeranyl cysteine" evidence="1">
    <location>
        <position position="218"/>
    </location>
</feature>
<sequence length="221" mass="25288">MAKMDHDYRLNIVLVGDNQCGKSFLLSRYCDGMFVENGIQLWHGIEIKNKIIELKNQSTNEIVKVKLMIFDGNGGCKFKELFYENYLKHQHGFIIMYDVTNLESFNNLSNWISKIKNSYQTSNLYPSPEPILFIVGNKCDLIDDSKITTIVDLKKPQEFCDSLSIPSIHNVSVKENINVDLIFQKLSQLIMDTYPPPKISEIKKIKNVDSGGDSINNCIIN</sequence>